<proteinExistence type="inferred from homology"/>
<dbReference type="EC" id="3.1.26.4" evidence="1"/>
<dbReference type="EMBL" id="AE016795">
    <property type="protein sequence ID" value="AAO10276.1"/>
    <property type="molecule type" value="Genomic_DNA"/>
</dbReference>
<dbReference type="RefSeq" id="WP_011079776.1">
    <property type="nucleotide sequence ID" value="NC_004459.3"/>
</dbReference>
<dbReference type="SMR" id="Q8DBE7"/>
<dbReference type="KEGG" id="vvu:VV1_1874"/>
<dbReference type="HOGENOM" id="CLU_036532_3_2_6"/>
<dbReference type="Proteomes" id="UP000002275">
    <property type="component" value="Chromosome 1"/>
</dbReference>
<dbReference type="GO" id="GO:0005737">
    <property type="term" value="C:cytoplasm"/>
    <property type="evidence" value="ECO:0007669"/>
    <property type="project" value="UniProtKB-SubCell"/>
</dbReference>
<dbReference type="GO" id="GO:0032299">
    <property type="term" value="C:ribonuclease H2 complex"/>
    <property type="evidence" value="ECO:0007669"/>
    <property type="project" value="TreeGrafter"/>
</dbReference>
<dbReference type="GO" id="GO:0030145">
    <property type="term" value="F:manganese ion binding"/>
    <property type="evidence" value="ECO:0007669"/>
    <property type="project" value="UniProtKB-UniRule"/>
</dbReference>
<dbReference type="GO" id="GO:0003723">
    <property type="term" value="F:RNA binding"/>
    <property type="evidence" value="ECO:0007669"/>
    <property type="project" value="InterPro"/>
</dbReference>
<dbReference type="GO" id="GO:0004523">
    <property type="term" value="F:RNA-DNA hybrid ribonuclease activity"/>
    <property type="evidence" value="ECO:0007669"/>
    <property type="project" value="UniProtKB-UniRule"/>
</dbReference>
<dbReference type="GO" id="GO:0043137">
    <property type="term" value="P:DNA replication, removal of RNA primer"/>
    <property type="evidence" value="ECO:0007669"/>
    <property type="project" value="TreeGrafter"/>
</dbReference>
<dbReference type="GO" id="GO:0006298">
    <property type="term" value="P:mismatch repair"/>
    <property type="evidence" value="ECO:0007669"/>
    <property type="project" value="TreeGrafter"/>
</dbReference>
<dbReference type="CDD" id="cd07182">
    <property type="entry name" value="RNase_HII_bacteria_HII_like"/>
    <property type="match status" value="1"/>
</dbReference>
<dbReference type="FunFam" id="3.30.420.10:FF:000006">
    <property type="entry name" value="Ribonuclease HII"/>
    <property type="match status" value="1"/>
</dbReference>
<dbReference type="Gene3D" id="3.30.420.10">
    <property type="entry name" value="Ribonuclease H-like superfamily/Ribonuclease H"/>
    <property type="match status" value="1"/>
</dbReference>
<dbReference type="HAMAP" id="MF_00052_B">
    <property type="entry name" value="RNase_HII_B"/>
    <property type="match status" value="1"/>
</dbReference>
<dbReference type="InterPro" id="IPR022898">
    <property type="entry name" value="RNase_HII"/>
</dbReference>
<dbReference type="InterPro" id="IPR001352">
    <property type="entry name" value="RNase_HII/HIII"/>
</dbReference>
<dbReference type="InterPro" id="IPR024567">
    <property type="entry name" value="RNase_HII/HIII_dom"/>
</dbReference>
<dbReference type="InterPro" id="IPR012337">
    <property type="entry name" value="RNaseH-like_sf"/>
</dbReference>
<dbReference type="InterPro" id="IPR036397">
    <property type="entry name" value="RNaseH_sf"/>
</dbReference>
<dbReference type="NCBIfam" id="NF000594">
    <property type="entry name" value="PRK00015.1-1"/>
    <property type="match status" value="1"/>
</dbReference>
<dbReference type="NCBIfam" id="NF000595">
    <property type="entry name" value="PRK00015.1-3"/>
    <property type="match status" value="1"/>
</dbReference>
<dbReference type="NCBIfam" id="NF000596">
    <property type="entry name" value="PRK00015.1-4"/>
    <property type="match status" value="1"/>
</dbReference>
<dbReference type="PANTHER" id="PTHR10954">
    <property type="entry name" value="RIBONUCLEASE H2 SUBUNIT A"/>
    <property type="match status" value="1"/>
</dbReference>
<dbReference type="PANTHER" id="PTHR10954:SF18">
    <property type="entry name" value="RIBONUCLEASE HII"/>
    <property type="match status" value="1"/>
</dbReference>
<dbReference type="Pfam" id="PF01351">
    <property type="entry name" value="RNase_HII"/>
    <property type="match status" value="1"/>
</dbReference>
<dbReference type="SUPFAM" id="SSF53098">
    <property type="entry name" value="Ribonuclease H-like"/>
    <property type="match status" value="1"/>
</dbReference>
<dbReference type="PROSITE" id="PS51975">
    <property type="entry name" value="RNASE_H_2"/>
    <property type="match status" value="1"/>
</dbReference>
<name>RNH2_VIBVU</name>
<comment type="function">
    <text evidence="1">Endonuclease that specifically degrades the RNA of RNA-DNA hybrids.</text>
</comment>
<comment type="catalytic activity">
    <reaction evidence="1">
        <text>Endonucleolytic cleavage to 5'-phosphomonoester.</text>
        <dbReference type="EC" id="3.1.26.4"/>
    </reaction>
</comment>
<comment type="cofactor">
    <cofactor evidence="1">
        <name>Mn(2+)</name>
        <dbReference type="ChEBI" id="CHEBI:29035"/>
    </cofactor>
    <cofactor evidence="1">
        <name>Mg(2+)</name>
        <dbReference type="ChEBI" id="CHEBI:18420"/>
    </cofactor>
    <text evidence="1">Manganese or magnesium. Binds 1 divalent metal ion per monomer in the absence of substrate. May bind a second metal ion after substrate binding.</text>
</comment>
<comment type="subcellular location">
    <subcellularLocation>
        <location evidence="1">Cytoplasm</location>
    </subcellularLocation>
</comment>
<comment type="similarity">
    <text evidence="1">Belongs to the RNase HII family.</text>
</comment>
<reference key="1">
    <citation type="submission" date="2002-12" db="EMBL/GenBank/DDBJ databases">
        <title>Complete genome sequence of Vibrio vulnificus CMCP6.</title>
        <authorList>
            <person name="Rhee J.H."/>
            <person name="Kim S.Y."/>
            <person name="Chung S.S."/>
            <person name="Kim J.J."/>
            <person name="Moon Y.H."/>
            <person name="Jeong H."/>
            <person name="Choy H.E."/>
        </authorList>
    </citation>
    <scope>NUCLEOTIDE SEQUENCE [LARGE SCALE GENOMIC DNA]</scope>
    <source>
        <strain>CMCP6</strain>
    </source>
</reference>
<keyword id="KW-0963">Cytoplasm</keyword>
<keyword id="KW-0255">Endonuclease</keyword>
<keyword id="KW-0378">Hydrolase</keyword>
<keyword id="KW-0464">Manganese</keyword>
<keyword id="KW-0479">Metal-binding</keyword>
<keyword id="KW-0540">Nuclease</keyword>
<evidence type="ECO:0000255" key="1">
    <source>
        <dbReference type="HAMAP-Rule" id="MF_00052"/>
    </source>
</evidence>
<evidence type="ECO:0000255" key="2">
    <source>
        <dbReference type="PROSITE-ProRule" id="PRU01319"/>
    </source>
</evidence>
<protein>
    <recommendedName>
        <fullName evidence="1">Ribonuclease HII</fullName>
        <shortName evidence="1">RNase HII</shortName>
        <ecNumber evidence="1">3.1.26.4</ecNumber>
    </recommendedName>
</protein>
<feature type="chain" id="PRO_0000111650" description="Ribonuclease HII">
    <location>
        <begin position="1"/>
        <end position="207"/>
    </location>
</feature>
<feature type="domain" description="RNase H type-2" evidence="2">
    <location>
        <begin position="19"/>
        <end position="207"/>
    </location>
</feature>
<feature type="binding site" evidence="1">
    <location>
        <position position="25"/>
    </location>
    <ligand>
        <name>a divalent metal cation</name>
        <dbReference type="ChEBI" id="CHEBI:60240"/>
    </ligand>
</feature>
<feature type="binding site" evidence="1">
    <location>
        <position position="26"/>
    </location>
    <ligand>
        <name>a divalent metal cation</name>
        <dbReference type="ChEBI" id="CHEBI:60240"/>
    </ligand>
</feature>
<feature type="binding site" evidence="1">
    <location>
        <position position="117"/>
    </location>
    <ligand>
        <name>a divalent metal cation</name>
        <dbReference type="ChEBI" id="CHEBI:60240"/>
    </ligand>
</feature>
<gene>
    <name evidence="1" type="primary">rnhB</name>
    <name type="ordered locus">VV1_1874</name>
</gene>
<sequence>MAAKETKELPPFEYPQGYHCIAGVDEVGRGPLVGDVVTAAVILDPNNPIEGLNDSKKLSEKKRLALLPEIQEKALAWAVGRCSPEEIDQLNILQATMVAMQRAVEGLAVKPDLVLIDGNRCPALPMDSQAVVKGDLRVAQISAASIIAKVVRDQEMEELDKQYPQFGFAQHKGYPTKAHFDAIEKHGVIEQHRKSFKPVKKALGIEE</sequence>
<accession>Q8DBE7</accession>
<organism>
    <name type="scientific">Vibrio vulnificus (strain CMCP6)</name>
    <dbReference type="NCBI Taxonomy" id="216895"/>
    <lineage>
        <taxon>Bacteria</taxon>
        <taxon>Pseudomonadati</taxon>
        <taxon>Pseudomonadota</taxon>
        <taxon>Gammaproteobacteria</taxon>
        <taxon>Vibrionales</taxon>
        <taxon>Vibrionaceae</taxon>
        <taxon>Vibrio</taxon>
    </lineage>
</organism>